<organism>
    <name type="scientific">Hepatitis B virus genotype B2 subtype adw (isolate China/patient4/1996)</name>
    <name type="common">HBV-B</name>
    <dbReference type="NCBI Taxonomy" id="489463"/>
    <lineage>
        <taxon>Viruses</taxon>
        <taxon>Riboviria</taxon>
        <taxon>Pararnavirae</taxon>
        <taxon>Artverviricota</taxon>
        <taxon>Revtraviricetes</taxon>
        <taxon>Blubervirales</taxon>
        <taxon>Hepadnaviridae</taxon>
        <taxon>Orthohepadnavirus</taxon>
        <taxon>Hepatitis B virus</taxon>
    </lineage>
</organism>
<reference key="1">
    <citation type="journal article" date="1996" name="J. Viral Hepat.">
        <title>Whole genome analysis of hepatitis B virus from four cases of fulminant hepatitis: genetic variability and its potential role in disease pathogenicity.</title>
        <authorList>
            <person name="Alexopoulou A."/>
            <person name="Karayiannis P."/>
            <person name="Hadziyannis S.J."/>
        </authorList>
    </citation>
    <scope>NUCLEOTIDE SEQUENCE [GENOMIC DNA]</scope>
</reference>
<reference key="2">
    <citation type="journal article" date="2007" name="World J. Gastroenterol.">
        <title>Hepatitis B virus replication.</title>
        <authorList>
            <person name="Beck J."/>
            <person name="Nassal M."/>
        </authorList>
    </citation>
    <scope>REVIEW</scope>
</reference>
<sequence length="843" mass="94379">MPLSYQHFRKMLLLDEEAGPLEEELPRLADEGLNRRVAEDLNLGDLNVSIPWTHKVGNFTGLYSSTVPCFNPQWQTPSFPSIHLQEDIVDRCKQFVGPLTVNENRRLKLIMPARFYPNVTKYLPLDKGIKPYYPEYIVDHYFQTRHYLHTLWKAGILYKRESTRSASFCGSPYSWEQDLQHGRLVFQTSKRHGDKSFCPQSPGILPRSSVGPCIQSQLRKSRLGPQPAQGQLAGRQQGGSGSIRARVHPSPWGTVGVEPSGSGPTHNCASSSSSCLHQSAVRKAAYSLLSTSKGHSSSGHAVELHNFPPNSSRFQSQGPVPSCWWLQFRNSEPCSEYCLSHIVNLIEDWGPCTEHGEHRIRTPRTPARVTGGVFLVDKNPHNTTESRLVVDFSQFSRGNTRVSWPKFAVPNLQSLTNLLSSNLSWLSLDVSAAFYHLPLHPAAMPHLLVGSSGLSRYVARLSSHSRINNNQHGTMQNLHNSCSRNLYVSLMLLYKTYGRKLHLYSHPIILGFRKIPMGVGLSPFLLAQFTSAICSVVRRAFPHCLAFSYMDDVVLGAKSVQHLEALYAAVTNFLLSLGIHLNPHKTKRWGYSLNFMGYVIGSWGTLPQEHIVQKIKMCFRKLPVNRPIDWKVCQRIVGLLGFAAPFTQCGYPALMPLYACIQAKQAFTFSPTYKAFLSKQYLNLYPVARQRPGLCQVFRDATPTGWGLAIGHQRMRGTFVSPLPIHTAELLAACFARSRSGAKLIGTHNSVVLSRKYTSFPWLLGCAANWILRGTSFVYVPSALNPADDPSRGRLGLYRPLLRLPYQPTTGRTSLYADSPSVPSHLPDRVHFASPLHVAWRPP</sequence>
<gene>
    <name evidence="1" type="primary">P</name>
</gene>
<dbReference type="EC" id="2.7.7.7" evidence="1"/>
<dbReference type="EC" id="2.7.7.49" evidence="1"/>
<dbReference type="EC" id="3.1.26.4" evidence="1"/>
<dbReference type="EMBL" id="X97850">
    <property type="protein sequence ID" value="CAA66434.1"/>
    <property type="molecule type" value="Genomic_DNA"/>
</dbReference>
<dbReference type="Proteomes" id="UP000007917">
    <property type="component" value="Genome"/>
</dbReference>
<dbReference type="GO" id="GO:0003677">
    <property type="term" value="F:DNA binding"/>
    <property type="evidence" value="ECO:0007669"/>
    <property type="project" value="UniProtKB-UniRule"/>
</dbReference>
<dbReference type="GO" id="GO:0003887">
    <property type="term" value="F:DNA-directed DNA polymerase activity"/>
    <property type="evidence" value="ECO:0007669"/>
    <property type="project" value="UniProtKB-UniRule"/>
</dbReference>
<dbReference type="GO" id="GO:0046872">
    <property type="term" value="F:metal ion binding"/>
    <property type="evidence" value="ECO:0007669"/>
    <property type="project" value="UniProtKB-UniRule"/>
</dbReference>
<dbReference type="GO" id="GO:0003964">
    <property type="term" value="F:RNA-directed DNA polymerase activity"/>
    <property type="evidence" value="ECO:0007669"/>
    <property type="project" value="UniProtKB-UniRule"/>
</dbReference>
<dbReference type="GO" id="GO:0004523">
    <property type="term" value="F:RNA-DNA hybrid ribonuclease activity"/>
    <property type="evidence" value="ECO:0007669"/>
    <property type="project" value="UniProtKB-UniRule"/>
</dbReference>
<dbReference type="GO" id="GO:0006260">
    <property type="term" value="P:DNA replication"/>
    <property type="evidence" value="ECO:0007669"/>
    <property type="project" value="UniProtKB-UniRule"/>
</dbReference>
<dbReference type="GO" id="GO:0052170">
    <property type="term" value="P:symbiont-mediated suppression of host innate immune response"/>
    <property type="evidence" value="ECO:0007669"/>
    <property type="project" value="UniProtKB-UniRule"/>
</dbReference>
<dbReference type="FunFam" id="3.30.70.270:FF:000009">
    <property type="entry name" value="Protein P"/>
    <property type="match status" value="1"/>
</dbReference>
<dbReference type="Gene3D" id="3.30.70.270">
    <property type="match status" value="1"/>
</dbReference>
<dbReference type="HAMAP" id="MF_04073">
    <property type="entry name" value="HBV_DPOL"/>
    <property type="match status" value="1"/>
</dbReference>
<dbReference type="InterPro" id="IPR043502">
    <property type="entry name" value="DNA/RNA_pol_sf"/>
</dbReference>
<dbReference type="InterPro" id="IPR001462">
    <property type="entry name" value="DNApol_viral_C"/>
</dbReference>
<dbReference type="InterPro" id="IPR000201">
    <property type="entry name" value="DNApol_viral_N"/>
</dbReference>
<dbReference type="InterPro" id="IPR037531">
    <property type="entry name" value="HBV_DPOL"/>
</dbReference>
<dbReference type="InterPro" id="IPR043128">
    <property type="entry name" value="Rev_trsase/Diguanyl_cyclase"/>
</dbReference>
<dbReference type="InterPro" id="IPR000477">
    <property type="entry name" value="RT_dom"/>
</dbReference>
<dbReference type="InterPro" id="IPR051320">
    <property type="entry name" value="Viral_Replic_Matur_Polypro"/>
</dbReference>
<dbReference type="PANTHER" id="PTHR33064">
    <property type="entry name" value="POL PROTEIN"/>
    <property type="match status" value="1"/>
</dbReference>
<dbReference type="PANTHER" id="PTHR33064:SF37">
    <property type="entry name" value="RIBONUCLEASE H"/>
    <property type="match status" value="1"/>
</dbReference>
<dbReference type="Pfam" id="PF00336">
    <property type="entry name" value="DNA_pol_viral_C"/>
    <property type="match status" value="1"/>
</dbReference>
<dbReference type="Pfam" id="PF00242">
    <property type="entry name" value="DNA_pol_viral_N"/>
    <property type="match status" value="1"/>
</dbReference>
<dbReference type="Pfam" id="PF00078">
    <property type="entry name" value="RVT_1"/>
    <property type="match status" value="1"/>
</dbReference>
<dbReference type="SUPFAM" id="SSF56672">
    <property type="entry name" value="DNA/RNA polymerases"/>
    <property type="match status" value="1"/>
</dbReference>
<dbReference type="PROSITE" id="PS50878">
    <property type="entry name" value="RT_POL"/>
    <property type="match status" value="1"/>
</dbReference>
<proteinExistence type="inferred from homology"/>
<feature type="chain" id="PRO_0000323257" description="Protein P">
    <location>
        <begin position="1"/>
        <end position="843"/>
    </location>
</feature>
<feature type="domain" description="Reverse transcriptase" evidence="1">
    <location>
        <begin position="357"/>
        <end position="600"/>
    </location>
</feature>
<feature type="region of interest" description="Terminal protein domain (TP)" evidence="1">
    <location>
        <begin position="1"/>
        <end position="177"/>
    </location>
</feature>
<feature type="region of interest" description="Spacer" evidence="1">
    <location>
        <begin position="178"/>
        <end position="346"/>
    </location>
</feature>
<feature type="region of interest" description="Disordered" evidence="2">
    <location>
        <begin position="219"/>
        <end position="269"/>
    </location>
</feature>
<feature type="region of interest" description="Polymerase/reverse transcriptase domain (RT)" evidence="1">
    <location>
        <begin position="347"/>
        <end position="690"/>
    </location>
</feature>
<feature type="compositionally biased region" description="Low complexity" evidence="2">
    <location>
        <begin position="223"/>
        <end position="235"/>
    </location>
</feature>
<feature type="binding site" evidence="1">
    <location>
        <position position="429"/>
    </location>
    <ligand>
        <name>Mg(2+)</name>
        <dbReference type="ChEBI" id="CHEBI:18420"/>
        <note>catalytic</note>
    </ligand>
</feature>
<feature type="binding site" evidence="1">
    <location>
        <position position="551"/>
    </location>
    <ligand>
        <name>Mg(2+)</name>
        <dbReference type="ChEBI" id="CHEBI:18420"/>
        <note>catalytic</note>
    </ligand>
</feature>
<feature type="binding site" evidence="1">
    <location>
        <position position="552"/>
    </location>
    <ligand>
        <name>Mg(2+)</name>
        <dbReference type="ChEBI" id="CHEBI:18420"/>
        <note>catalytic</note>
    </ligand>
</feature>
<feature type="site" description="Priming of reverse-transcription by covalently linking the first nucleotide of the (-)DNA" evidence="1">
    <location>
        <position position="63"/>
    </location>
</feature>
<accession>Q67925</accession>
<evidence type="ECO:0000255" key="1">
    <source>
        <dbReference type="HAMAP-Rule" id="MF_04073"/>
    </source>
</evidence>
<evidence type="ECO:0000256" key="2">
    <source>
        <dbReference type="SAM" id="MobiDB-lite"/>
    </source>
</evidence>
<comment type="function">
    <text evidence="1">Multifunctional enzyme that converts the viral RNA genome into dsDNA in viral cytoplasmic capsids. This enzyme displays a DNA polymerase activity that can copy either DNA or RNA templates, and a ribonuclease H (RNase H) activity that cleaves the RNA strand of RNA-DNA heteroduplexes in a partially processive 3'- to 5'-endonucleasic mode. Neo-synthesized pregenomic RNA (pgRNA) are encapsidated together with the P protein, and reverse-transcribed inside the nucleocapsid. Initiation of reverse-transcription occurs first by binding the epsilon loop on the pgRNA genome, and is initiated by protein priming, thereby the 5'-end of (-)DNA is covalently linked to P protein. Partial (+)DNA is synthesized from the (-)DNA template and generates the relaxed circular DNA (RC-DNA) genome. After budding and infection, the RC-DNA migrates in the nucleus, and is converted into a plasmid-like covalently closed circular DNA (cccDNA). The activity of P protein does not seem to be necessary for cccDNA generation, and is presumably released from (+)DNA by host nuclear DNA repair machinery.</text>
</comment>
<comment type="catalytic activity">
    <reaction evidence="1">
        <text>DNA(n) + a 2'-deoxyribonucleoside 5'-triphosphate = DNA(n+1) + diphosphate</text>
        <dbReference type="Rhea" id="RHEA:22508"/>
        <dbReference type="Rhea" id="RHEA-COMP:17339"/>
        <dbReference type="Rhea" id="RHEA-COMP:17340"/>
        <dbReference type="ChEBI" id="CHEBI:33019"/>
        <dbReference type="ChEBI" id="CHEBI:61560"/>
        <dbReference type="ChEBI" id="CHEBI:173112"/>
        <dbReference type="EC" id="2.7.7.7"/>
    </reaction>
</comment>
<comment type="catalytic activity">
    <reaction evidence="1">
        <text>DNA(n) + a 2'-deoxyribonucleoside 5'-triphosphate = DNA(n+1) + diphosphate</text>
        <dbReference type="Rhea" id="RHEA:22508"/>
        <dbReference type="Rhea" id="RHEA-COMP:17339"/>
        <dbReference type="Rhea" id="RHEA-COMP:17340"/>
        <dbReference type="ChEBI" id="CHEBI:33019"/>
        <dbReference type="ChEBI" id="CHEBI:61560"/>
        <dbReference type="ChEBI" id="CHEBI:173112"/>
        <dbReference type="EC" id="2.7.7.49"/>
    </reaction>
</comment>
<comment type="catalytic activity">
    <reaction evidence="1">
        <text>Endonucleolytic cleavage to 5'-phosphomonoester.</text>
        <dbReference type="EC" id="3.1.26.4"/>
    </reaction>
</comment>
<comment type="activity regulation">
    <text evidence="1">Activated by host HSP70 and HSP40 in vitro to be able to bind the epsilon loop of the pgRNA. Because deletion of the RNase H region renders the protein partly chaperone-independent, the chaperones may be needed indirectly to relieve occlusion of the RNA-binding site by this domain. Inhibited by several reverse-transcriptase inhibitors: Lamivudine, Adefovir and Entecavir.</text>
</comment>
<comment type="domain">
    <text evidence="1">Terminal protein domain (TP) is hepadnavirus-specific. Spacer domain is highly variable and separates the TP and RT domains. Polymerase/reverse-transcriptase domain (RT) and ribonuclease H domain (RH) are similar to retrovirus reverse transcriptase/RNase H.</text>
</comment>
<comment type="domain">
    <text evidence="1">The polymerase/reverse transcriptase (RT) and ribonuclease H (RH) domains are structured in five subdomains: finger, palm, thumb, connection and RNase H. Within the palm subdomain, the 'primer grip' region is thought to be involved in the positioning of the primer terminus for accommodating the incoming nucleotide. The RH domain stabilizes the association of RT with primer-template.</text>
</comment>
<comment type="miscellaneous">
    <text evidence="1">Hepadnaviral virions contain probably just one P protein molecule per particle.</text>
</comment>
<comment type="similarity">
    <text evidence="1">Belongs to the hepadnaviridae P protein family.</text>
</comment>
<keyword id="KW-0235">DNA replication</keyword>
<keyword id="KW-0238">DNA-binding</keyword>
<keyword id="KW-0239">DNA-directed DNA polymerase</keyword>
<keyword id="KW-0255">Endonuclease</keyword>
<keyword id="KW-0945">Host-virus interaction</keyword>
<keyword id="KW-0378">Hydrolase</keyword>
<keyword id="KW-1090">Inhibition of host innate immune response by virus</keyword>
<keyword id="KW-1113">Inhibition of host RLR pathway by virus</keyword>
<keyword id="KW-0460">Magnesium</keyword>
<keyword id="KW-0479">Metal-binding</keyword>
<keyword id="KW-0511">Multifunctional enzyme</keyword>
<keyword id="KW-0540">Nuclease</keyword>
<keyword id="KW-0548">Nucleotidyltransferase</keyword>
<keyword id="KW-0695">RNA-directed DNA polymerase</keyword>
<keyword id="KW-0808">Transferase</keyword>
<keyword id="KW-0899">Viral immunoevasion</keyword>
<protein>
    <recommendedName>
        <fullName evidence="1">Protein P</fullName>
    </recommendedName>
    <domain>
        <recommendedName>
            <fullName evidence="1">DNA-directed DNA polymerase</fullName>
            <ecNumber evidence="1">2.7.7.7</ecNumber>
        </recommendedName>
    </domain>
    <domain>
        <recommendedName>
            <fullName evidence="1">RNA-directed DNA polymerase</fullName>
            <ecNumber evidence="1">2.7.7.49</ecNumber>
        </recommendedName>
    </domain>
    <domain>
        <recommendedName>
            <fullName evidence="1">Ribonuclease H</fullName>
            <ecNumber evidence="1">3.1.26.4</ecNumber>
        </recommendedName>
    </domain>
</protein>
<name>DPOL_HBVB6</name>
<organismHost>
    <name type="scientific">Homo sapiens</name>
    <name type="common">Human</name>
    <dbReference type="NCBI Taxonomy" id="9606"/>
</organismHost>
<organismHost>
    <name type="scientific">Pan troglodytes</name>
    <name type="common">Chimpanzee</name>
    <dbReference type="NCBI Taxonomy" id="9598"/>
</organismHost>